<name>DPO3B_MYCPU</name>
<gene>
    <name type="primary">dnaN</name>
    <name type="ordered locus">MYPU_0020</name>
</gene>
<organism>
    <name type="scientific">Mycoplasmopsis pulmonis (strain UAB CTIP)</name>
    <name type="common">Mycoplasma pulmonis</name>
    <dbReference type="NCBI Taxonomy" id="272635"/>
    <lineage>
        <taxon>Bacteria</taxon>
        <taxon>Bacillati</taxon>
        <taxon>Mycoplasmatota</taxon>
        <taxon>Mycoplasmoidales</taxon>
        <taxon>Metamycoplasmataceae</taxon>
        <taxon>Mycoplasmopsis</taxon>
    </lineage>
</organism>
<keyword id="KW-0963">Cytoplasm</keyword>
<keyword id="KW-0235">DNA replication</keyword>
<keyword id="KW-0238">DNA-binding</keyword>
<keyword id="KW-0239">DNA-directed DNA polymerase</keyword>
<keyword id="KW-0548">Nucleotidyltransferase</keyword>
<keyword id="KW-1185">Reference proteome</keyword>
<keyword id="KW-0808">Transferase</keyword>
<sequence>MKLFLEKSRFLRFLENTTKIIESNNSNYELRGAYFQVRQDKIILISSNEDISIKNEYLLDGIKNKTEGESDFLVLNSLLKNIIKKCSDSIILEKEKNTLKIFSDLQSYEINLLDHERFPDIKFGLNNSQLQLKTEQFKQALKNVVFAADLSNAQELLLNSVNLSLKNNILTLVATNRARIAMQKIKTEDSQEFNLTINSKVVKELISLSMSNTLILSPGTFELKIKSGNLEIKTKVIEIPYMNVENVFPNKFNFVIHIDKKELLSLIDKVSIVNDEKNGNKILIEYNPSKKEKKLKLSSYWPDLGFSEVFSDNFEVESEILLKFFINANYLKESINVFDGMISIFITENKDRMVISSETNLNNKQLIAALRGH</sequence>
<dbReference type="EMBL" id="AL445563">
    <property type="protein sequence ID" value="CAC13175.1"/>
    <property type="molecule type" value="Genomic_DNA"/>
</dbReference>
<dbReference type="PIR" id="B90512">
    <property type="entry name" value="B90512"/>
</dbReference>
<dbReference type="RefSeq" id="WP_010924806.1">
    <property type="nucleotide sequence ID" value="NC_002771.1"/>
</dbReference>
<dbReference type="SMR" id="Q98RK6"/>
<dbReference type="STRING" id="272635.gene:17576581"/>
<dbReference type="KEGG" id="mpu:MYPU_0020"/>
<dbReference type="eggNOG" id="COG0592">
    <property type="taxonomic scope" value="Bacteria"/>
</dbReference>
<dbReference type="HOGENOM" id="CLU_038149_2_2_14"/>
<dbReference type="BioCyc" id="MPUL272635:G1GT6-2-MONOMER"/>
<dbReference type="Proteomes" id="UP000000528">
    <property type="component" value="Chromosome"/>
</dbReference>
<dbReference type="GO" id="GO:0005737">
    <property type="term" value="C:cytoplasm"/>
    <property type="evidence" value="ECO:0007669"/>
    <property type="project" value="UniProtKB-SubCell"/>
</dbReference>
<dbReference type="GO" id="GO:0009360">
    <property type="term" value="C:DNA polymerase III complex"/>
    <property type="evidence" value="ECO:0007669"/>
    <property type="project" value="InterPro"/>
</dbReference>
<dbReference type="GO" id="GO:0008408">
    <property type="term" value="F:3'-5' exonuclease activity"/>
    <property type="evidence" value="ECO:0007669"/>
    <property type="project" value="InterPro"/>
</dbReference>
<dbReference type="GO" id="GO:0003677">
    <property type="term" value="F:DNA binding"/>
    <property type="evidence" value="ECO:0007669"/>
    <property type="project" value="UniProtKB-KW"/>
</dbReference>
<dbReference type="GO" id="GO:0003887">
    <property type="term" value="F:DNA-directed DNA polymerase activity"/>
    <property type="evidence" value="ECO:0007669"/>
    <property type="project" value="UniProtKB-KW"/>
</dbReference>
<dbReference type="GO" id="GO:0006271">
    <property type="term" value="P:DNA strand elongation involved in DNA replication"/>
    <property type="evidence" value="ECO:0007669"/>
    <property type="project" value="TreeGrafter"/>
</dbReference>
<dbReference type="Gene3D" id="3.70.10.10">
    <property type="match status" value="1"/>
</dbReference>
<dbReference type="Gene3D" id="3.10.150.10">
    <property type="entry name" value="DNA Polymerase III, subunit A, domain 2"/>
    <property type="match status" value="1"/>
</dbReference>
<dbReference type="InterPro" id="IPR046938">
    <property type="entry name" value="DNA_clamp_sf"/>
</dbReference>
<dbReference type="InterPro" id="IPR001001">
    <property type="entry name" value="DNA_polIII_beta"/>
</dbReference>
<dbReference type="InterPro" id="IPR022635">
    <property type="entry name" value="DNA_polIII_beta_C"/>
</dbReference>
<dbReference type="InterPro" id="IPR022637">
    <property type="entry name" value="DNA_polIII_beta_cen"/>
</dbReference>
<dbReference type="InterPro" id="IPR022634">
    <property type="entry name" value="DNA_polIII_beta_N"/>
</dbReference>
<dbReference type="PANTHER" id="PTHR30478:SF0">
    <property type="entry name" value="BETA SLIDING CLAMP"/>
    <property type="match status" value="1"/>
</dbReference>
<dbReference type="PANTHER" id="PTHR30478">
    <property type="entry name" value="DNA POLYMERASE III SUBUNIT BETA"/>
    <property type="match status" value="1"/>
</dbReference>
<dbReference type="Pfam" id="PF00712">
    <property type="entry name" value="DNA_pol3_beta"/>
    <property type="match status" value="1"/>
</dbReference>
<dbReference type="Pfam" id="PF02767">
    <property type="entry name" value="DNA_pol3_beta_2"/>
    <property type="match status" value="1"/>
</dbReference>
<dbReference type="Pfam" id="PF02768">
    <property type="entry name" value="DNA_pol3_beta_3"/>
    <property type="match status" value="1"/>
</dbReference>
<dbReference type="SMART" id="SM00480">
    <property type="entry name" value="POL3Bc"/>
    <property type="match status" value="1"/>
</dbReference>
<dbReference type="SUPFAM" id="SSF55979">
    <property type="entry name" value="DNA clamp"/>
    <property type="match status" value="3"/>
</dbReference>
<accession>Q98RK6</accession>
<proteinExistence type="inferred from homology"/>
<reference key="1">
    <citation type="journal article" date="2001" name="Nucleic Acids Res.">
        <title>The complete genome sequence of the murine respiratory pathogen Mycoplasma pulmonis.</title>
        <authorList>
            <person name="Chambaud I."/>
            <person name="Heilig R."/>
            <person name="Ferris S."/>
            <person name="Barbe V."/>
            <person name="Samson D."/>
            <person name="Galisson F."/>
            <person name="Moszer I."/>
            <person name="Dybvig K."/>
            <person name="Wroblewski H."/>
            <person name="Viari A."/>
            <person name="Rocha E.P.C."/>
            <person name="Blanchard A."/>
        </authorList>
    </citation>
    <scope>NUCLEOTIDE SEQUENCE [LARGE SCALE GENOMIC DNA]</scope>
    <source>
        <strain>UAB CTIP</strain>
    </source>
</reference>
<feature type="chain" id="PRO_0000105447" description="Beta sliding clamp">
    <location>
        <begin position="1"/>
        <end position="373"/>
    </location>
</feature>
<protein>
    <recommendedName>
        <fullName>Beta sliding clamp</fullName>
        <shortName>Beta clamp</shortName>
        <shortName>Sliding clamp</shortName>
    </recommendedName>
    <alternativeName>
        <fullName>Beta-clamp processivity factor</fullName>
    </alternativeName>
    <alternativeName>
        <fullName>DNA polymerase III beta sliding clamp subunit</fullName>
    </alternativeName>
    <alternativeName>
        <fullName>DNA polymerase III subunit beta</fullName>
    </alternativeName>
</protein>
<comment type="function">
    <text evidence="1">Confers DNA tethering and processivity to DNA polymerases and other proteins. Acts as a clamp, forming a ring around DNA (a reaction catalyzed by the clamp-loading complex) which diffuses in an ATP-independent manner freely and bidirectionally along dsDNA. Initially characterized for its ability to contact the catalytic subunit of DNA polymerase III (Pol III), a complex, multichain enzyme responsible for most of the replicative synthesis in bacteria; Pol III exhibits 3'-5' exonuclease proofreading activity. The beta chain is required for initiation of replication as well as for processivity of DNA replication.</text>
</comment>
<comment type="subunit">
    <text evidence="1">Forms a ring-shaped head-to-tail homodimer around DNA which binds and tethers DNA polymerases and other proteins to the DNA. The DNA replisome complex has a single clamp-loading complex (3 tau and 1 each of delta, delta', psi and chi subunits) which binds 3 Pol III cores (1 core on the leading strand and 2 on the lagging strand) each with a beta sliding clamp dimer. Additional proteins in the replisome are other copies of gamma, psi and chi, Ssb, DNA helicase and RNA primase.</text>
</comment>
<comment type="subcellular location">
    <subcellularLocation>
        <location evidence="1">Cytoplasm</location>
    </subcellularLocation>
</comment>
<comment type="similarity">
    <text evidence="2">Belongs to the beta sliding clamp family.</text>
</comment>
<evidence type="ECO:0000250" key="1">
    <source>
        <dbReference type="UniProtKB" id="P0A988"/>
    </source>
</evidence>
<evidence type="ECO:0000305" key="2"/>